<keyword id="KW-0002">3D-structure</keyword>
<keyword id="KW-0029">Amino-acid transport</keyword>
<keyword id="KW-1003">Cell membrane</keyword>
<keyword id="KW-0225">Disease variant</keyword>
<keyword id="KW-1015">Disulfide bond</keyword>
<keyword id="KW-0325">Glycoprotein</keyword>
<keyword id="KW-0472">Membrane</keyword>
<keyword id="KW-1285">Osteoporosis</keyword>
<keyword id="KW-0597">Phosphoprotein</keyword>
<keyword id="KW-1267">Proteomics identification</keyword>
<keyword id="KW-1185">Reference proteome</keyword>
<keyword id="KW-0812">Transmembrane</keyword>
<keyword id="KW-1133">Transmembrane helix</keyword>
<keyword id="KW-0813">Transport</keyword>
<comment type="function">
    <text evidence="1 5 8 12 13 14 15 18 21 22 23">Heterodimer with SLC3A2, that functions as an antiporter which operates as an efflux route by exporting cationic amino acids from inside the cells in exchange with neutral amino acids plus sodium ions and may participate in nitric oxide synthesis via the transport of L-arginine (PubMed:10080182, PubMed:10655553, PubMed:14603368, PubMed:15756301, PubMed:15776427, PubMed:17329401, PubMed:9829974, PubMed:9878049). Also mediates arginine transport in non-polarized cells, such as monocytes, and is essential for the correct function of these cells (PubMed:15280038, PubMed:31705628). The transport mechanism is electroneutral and operates with a stoichiometry of 1:1 (By similarity). In vitro, Na(+) and Li(+), but also H(+), are cotransported with the neutral amino acids (By similarity).</text>
</comment>
<comment type="catalytic activity">
    <reaction evidence="1">
        <text>L-leucine(out) + L-arginine(in) + Na(+)(out) = L-leucine(in) + L-arginine(out) + Na(+)(in)</text>
        <dbReference type="Rhea" id="RHEA:70831"/>
        <dbReference type="ChEBI" id="CHEBI:29101"/>
        <dbReference type="ChEBI" id="CHEBI:32682"/>
        <dbReference type="ChEBI" id="CHEBI:57427"/>
    </reaction>
</comment>
<comment type="catalytic activity">
    <reaction evidence="1">
        <text>L-leucine(out) + L-lysine(in) + Na(+)(out) = L-leucine(in) + L-lysine(out) + Na(+)(in)</text>
        <dbReference type="Rhea" id="RHEA:74971"/>
        <dbReference type="ChEBI" id="CHEBI:29101"/>
        <dbReference type="ChEBI" id="CHEBI:32551"/>
        <dbReference type="ChEBI" id="CHEBI:57427"/>
    </reaction>
</comment>
<comment type="catalytic activity">
    <reaction evidence="1">
        <text>L-leucine(out) + L-ornithine(in) + Na(+)(out) = L-leucine(in) + L-ornithine(out) + Na(+)(in)</text>
        <dbReference type="Rhea" id="RHEA:74963"/>
        <dbReference type="ChEBI" id="CHEBI:29101"/>
        <dbReference type="ChEBI" id="CHEBI:46911"/>
        <dbReference type="ChEBI" id="CHEBI:57427"/>
    </reaction>
</comment>
<comment type="biophysicochemical properties">
    <kinetics>
        <KM evidence="23">31.7 uM for L-leucine (in the presence of 0.1 M NaCl)</KM>
        <KM evidence="23">16.2 uM for L-leucine (in the presence of 0.1 M LiCl)</KM>
        <KM evidence="21">0.182 uM for L-arginine (in monocytes-derived macrophages from healthy donors)</KM>
        <Vmax evidence="21">3.822 nmol/min/mg enzyme toward L-arginine (in monocytes-derived macrophages from healthy donors)</Vmax>
    </kinetics>
</comment>
<comment type="subunit">
    <text evidence="20 22 23">Disulfide-linked heterodimer with the amino acid transport protein SLC3A2/4F2hc.</text>
</comment>
<comment type="interaction">
    <interactant intactId="EBI-2849880">
        <id>Q9UM01</id>
    </interactant>
    <interactant intactId="EBI-702356">
        <id>P08195</id>
        <label>SLC3A2</label>
    </interactant>
    <organismsDiffer>false</organismsDiffer>
    <experiments>2</experiments>
</comment>
<comment type="subcellular location">
    <subcellularLocation>
        <location evidence="14">Basolateral cell membrane</location>
        <topology evidence="3">Multi-pass membrane protein</topology>
    </subcellularLocation>
</comment>
<comment type="tissue specificity">
    <text evidence="6 9 10 13 17 18 22">Highest expression in kidney and peripheral blood leukocytes (PubMed:9829974). Weaker expression is observed in lung, heart, placenta, spleen, testis and small intestine (PubMed:9829974). Expressed in normal fibroblasts and those from LPI patients (PubMed:10080183, PubMed:11078698). Also expressed in HUVECs, monocytes, retinal pigment epithelial cells, and various carcinoma cell lines, with highest expression in a colon-carcinoma cell line (PubMed:11742806, PubMed:15280038, PubMed:17197568, PubMed:17329401).</text>
</comment>
<comment type="induction">
    <text evidence="13">Expression is stimulated and enhanced by IFNG/IFN-gamma.</text>
</comment>
<comment type="disease" evidence="5 7 8 11 14 15 19 20 22">
    <disease id="DI-01920">
        <name>Lysinuric protein intolerance</name>
        <acronym>LPI</acronym>
        <description>A metabolic disorder characterized by increased renal excretion of cationic amino acid (CAA), reduced CAA absorption from intestine, and orotic aciduria. On a normal diet, LPI patients present poor feeding, vomiting, diarrhea, episodes of hyperammoniaemic coma and growth retardation. Hepatosplenomegaly, osteoporosis and a life-threatening pulmonary involvement (alveolar proteinosis) are also seen. Biochemically LPI is characterized by defective transport of dibasic amino acids at the basolateral membrane of epithelial cells in kidney and intestine.</description>
        <dbReference type="MIM" id="222700"/>
    </disease>
    <text>The disease is caused by variants affecting the gene represented in this entry.</text>
</comment>
<comment type="similarity">
    <text evidence="26">Belongs to the amino acid-polyamine-organocation (APC) superfamily. L-type amino acid transporter (LAT) (TC 2.A.3.8) family.</text>
</comment>
<comment type="sequence caution" evidence="26">
    <conflict type="erroneous gene model prediction">
        <sequence resource="EMBL-CDS" id="BAA95120"/>
    </conflict>
</comment>
<comment type="sequence caution" evidence="26">
    <conflict type="erroneous initiation">
        <sequence resource="EMBL-CDS" id="CAD62619"/>
    </conflict>
    <text>Extended N-terminus.</text>
</comment>
<dbReference type="EMBL" id="AF092032">
    <property type="protein sequence ID" value="AAC83706.1"/>
    <property type="molecule type" value="mRNA"/>
</dbReference>
<dbReference type="EMBL" id="AJ130718">
    <property type="protein sequence ID" value="CAA10198.1"/>
    <property type="molecule type" value="mRNA"/>
</dbReference>
<dbReference type="EMBL" id="Y18474">
    <property type="protein sequence ID" value="CAB40136.1"/>
    <property type="molecule type" value="mRNA"/>
</dbReference>
<dbReference type="EMBL" id="AB031537">
    <property type="protein sequence ID" value="BAA95120.1"/>
    <property type="status" value="ALT_SEQ"/>
    <property type="molecule type" value="Genomic_DNA"/>
</dbReference>
<dbReference type="EMBL" id="AB011263">
    <property type="protein sequence ID" value="BAB11849.1"/>
    <property type="molecule type" value="mRNA"/>
</dbReference>
<dbReference type="EMBL" id="AB020532">
    <property type="protein sequence ID" value="BAA87623.1"/>
    <property type="molecule type" value="mRNA"/>
</dbReference>
<dbReference type="EMBL" id="BX161519">
    <property type="protein sequence ID" value="CAD61952.1"/>
    <property type="molecule type" value="mRNA"/>
</dbReference>
<dbReference type="EMBL" id="BX248291">
    <property type="protein sequence ID" value="CAD62619.1"/>
    <property type="status" value="ALT_INIT"/>
    <property type="molecule type" value="mRNA"/>
</dbReference>
<dbReference type="EMBL" id="AK314351">
    <property type="protein sequence ID" value="BAG36987.1"/>
    <property type="molecule type" value="mRNA"/>
</dbReference>
<dbReference type="EMBL" id="CH471078">
    <property type="protein sequence ID" value="EAW66245.1"/>
    <property type="molecule type" value="Genomic_DNA"/>
</dbReference>
<dbReference type="EMBL" id="CH471078">
    <property type="protein sequence ID" value="EAW66246.1"/>
    <property type="molecule type" value="Genomic_DNA"/>
</dbReference>
<dbReference type="EMBL" id="CH471078">
    <property type="protein sequence ID" value="EAW66247.1"/>
    <property type="molecule type" value="Genomic_DNA"/>
</dbReference>
<dbReference type="EMBL" id="CH471078">
    <property type="protein sequence ID" value="EAW66248.1"/>
    <property type="molecule type" value="Genomic_DNA"/>
</dbReference>
<dbReference type="EMBL" id="BC003062">
    <property type="protein sequence ID" value="AAH03062.1"/>
    <property type="molecule type" value="mRNA"/>
</dbReference>
<dbReference type="EMBL" id="BC010107">
    <property type="protein sequence ID" value="AAH10107.1"/>
    <property type="molecule type" value="mRNA"/>
</dbReference>
<dbReference type="CCDS" id="CCDS9574.1"/>
<dbReference type="RefSeq" id="NP_001119577.1">
    <property type="nucleotide sequence ID" value="NM_001126105.3"/>
</dbReference>
<dbReference type="RefSeq" id="NP_001119578.1">
    <property type="nucleotide sequence ID" value="NM_001126106.4"/>
</dbReference>
<dbReference type="RefSeq" id="XP_006720365.1">
    <property type="nucleotide sequence ID" value="XM_006720302.1"/>
</dbReference>
<dbReference type="RefSeq" id="XP_011535600.1">
    <property type="nucleotide sequence ID" value="XM_011537298.2"/>
</dbReference>
<dbReference type="RefSeq" id="XP_011535601.1">
    <property type="nucleotide sequence ID" value="XM_011537299.2"/>
</dbReference>
<dbReference type="RefSeq" id="XP_054232899.1">
    <property type="nucleotide sequence ID" value="XM_054376924.1"/>
</dbReference>
<dbReference type="PDB" id="8XXI">
    <property type="method" value="EM"/>
    <property type="resolution" value="3.04 A"/>
    <property type="chains" value="A=2-511"/>
</dbReference>
<dbReference type="PDB" id="8XYJ">
    <property type="method" value="EM"/>
    <property type="resolution" value="3.33 A"/>
    <property type="chains" value="A=2-511"/>
</dbReference>
<dbReference type="PDB" id="8YLP">
    <property type="method" value="EM"/>
    <property type="resolution" value="2.90 A"/>
    <property type="chains" value="B=2-511"/>
</dbReference>
<dbReference type="PDBsum" id="8XXI"/>
<dbReference type="PDBsum" id="8XYJ"/>
<dbReference type="PDBsum" id="8YLP"/>
<dbReference type="EMDB" id="EMD-0905"/>
<dbReference type="EMDB" id="EMD-0907"/>
<dbReference type="EMDB" id="EMD-0908"/>
<dbReference type="EMDB" id="EMD-38750"/>
<dbReference type="EMDB" id="EMD-38775"/>
<dbReference type="EMDB" id="EMD-39388"/>
<dbReference type="SMR" id="Q9UM01"/>
<dbReference type="BioGRID" id="114518">
    <property type="interactions" value="6"/>
</dbReference>
<dbReference type="ComplexPortal" id="CPX-8187">
    <property type="entry name" value="Y+LAT1-4F2 heteromeric amino acid transporter complex"/>
</dbReference>
<dbReference type="FunCoup" id="Q9UM01">
    <property type="interactions" value="175"/>
</dbReference>
<dbReference type="IntAct" id="Q9UM01">
    <property type="interactions" value="2"/>
</dbReference>
<dbReference type="STRING" id="9606.ENSP00000380666"/>
<dbReference type="DrugBank" id="DB08838">
    <property type="generic name" value="Agmatine"/>
</dbReference>
<dbReference type="DrugBank" id="DB13146">
    <property type="generic name" value="Fluciclovine (18F)"/>
</dbReference>
<dbReference type="DrugBank" id="DB00130">
    <property type="generic name" value="L-Glutamine"/>
</dbReference>
<dbReference type="TCDB" id="2.A.3.8.22">
    <property type="family name" value="the amino acid-polyamine-organocation (apc) family"/>
</dbReference>
<dbReference type="GlyCosmos" id="Q9UM01">
    <property type="glycosylation" value="1 site, No reported glycans"/>
</dbReference>
<dbReference type="GlyGen" id="Q9UM01">
    <property type="glycosylation" value="1 site"/>
</dbReference>
<dbReference type="iPTMnet" id="Q9UM01"/>
<dbReference type="PhosphoSitePlus" id="Q9UM01"/>
<dbReference type="BioMuta" id="SLC7A7"/>
<dbReference type="DMDM" id="12643378"/>
<dbReference type="jPOST" id="Q9UM01"/>
<dbReference type="MassIVE" id="Q9UM01"/>
<dbReference type="PaxDb" id="9606-ENSP00000380666"/>
<dbReference type="PeptideAtlas" id="Q9UM01"/>
<dbReference type="ProteomicsDB" id="85165"/>
<dbReference type="Antibodypedia" id="22283">
    <property type="antibodies" value="78 antibodies from 19 providers"/>
</dbReference>
<dbReference type="DNASU" id="9056"/>
<dbReference type="Ensembl" id="ENST00000285850.11">
    <property type="protein sequence ID" value="ENSP00000285850.7"/>
    <property type="gene ID" value="ENSG00000155465.21"/>
</dbReference>
<dbReference type="Ensembl" id="ENST00000397528.8">
    <property type="protein sequence ID" value="ENSP00000380662.4"/>
    <property type="gene ID" value="ENSG00000155465.21"/>
</dbReference>
<dbReference type="Ensembl" id="ENST00000397529.6">
    <property type="protein sequence ID" value="ENSP00000380663.2"/>
    <property type="gene ID" value="ENSG00000155465.21"/>
</dbReference>
<dbReference type="Ensembl" id="ENST00000397532.9">
    <property type="protein sequence ID" value="ENSP00000380666.4"/>
    <property type="gene ID" value="ENSG00000155465.21"/>
</dbReference>
<dbReference type="Ensembl" id="ENST00000555702.5">
    <property type="protein sequence ID" value="ENSP00000451881.1"/>
    <property type="gene ID" value="ENSG00000155465.21"/>
</dbReference>
<dbReference type="Ensembl" id="ENST00000555911.2">
    <property type="protein sequence ID" value="ENSP00000452551.2"/>
    <property type="gene ID" value="ENSG00000155465.21"/>
</dbReference>
<dbReference type="Ensembl" id="ENST00000674313.1">
    <property type="protein sequence ID" value="ENSP00000501493.1"/>
    <property type="gene ID" value="ENSG00000155465.21"/>
</dbReference>
<dbReference type="GeneID" id="9056"/>
<dbReference type="KEGG" id="hsa:9056"/>
<dbReference type="MANE-Select" id="ENST00000674313.1">
    <property type="protein sequence ID" value="ENSP00000501493.1"/>
    <property type="RefSeq nucleotide sequence ID" value="NM_003982.4"/>
    <property type="RefSeq protein sequence ID" value="NP_003973.3"/>
</dbReference>
<dbReference type="UCSC" id="uc001wgr.5">
    <property type="organism name" value="human"/>
</dbReference>
<dbReference type="AGR" id="HGNC:11065"/>
<dbReference type="CTD" id="9056"/>
<dbReference type="DisGeNET" id="9056"/>
<dbReference type="GeneCards" id="SLC7A7"/>
<dbReference type="GeneReviews" id="SLC7A7"/>
<dbReference type="HGNC" id="HGNC:11065">
    <property type="gene designation" value="SLC7A7"/>
</dbReference>
<dbReference type="HPA" id="ENSG00000155465">
    <property type="expression patterns" value="Tissue enhanced (intestine, kidney)"/>
</dbReference>
<dbReference type="MalaCards" id="SLC7A7"/>
<dbReference type="MIM" id="222700">
    <property type="type" value="phenotype"/>
</dbReference>
<dbReference type="MIM" id="603593">
    <property type="type" value="gene"/>
</dbReference>
<dbReference type="neXtProt" id="NX_Q9UM01"/>
<dbReference type="OpenTargets" id="ENSG00000155465"/>
<dbReference type="Orphanet" id="470">
    <property type="disease" value="Lysinuric protein intolerance"/>
</dbReference>
<dbReference type="PharmGKB" id="PA35925"/>
<dbReference type="VEuPathDB" id="HostDB:ENSG00000155465"/>
<dbReference type="eggNOG" id="KOG1287">
    <property type="taxonomic scope" value="Eukaryota"/>
</dbReference>
<dbReference type="GeneTree" id="ENSGT00940000160134"/>
<dbReference type="HOGENOM" id="CLU_007946_3_0_1"/>
<dbReference type="InParanoid" id="Q9UM01"/>
<dbReference type="OMA" id="AIVFGKY"/>
<dbReference type="OrthoDB" id="10062876at2759"/>
<dbReference type="PAN-GO" id="Q9UM01">
    <property type="GO annotations" value="4 GO annotations based on evolutionary models"/>
</dbReference>
<dbReference type="PhylomeDB" id="Q9UM01"/>
<dbReference type="TreeFam" id="TF313355"/>
<dbReference type="PathwayCommons" id="Q9UM01"/>
<dbReference type="Reactome" id="R-HSA-210991">
    <property type="pathway name" value="Basigin interactions"/>
</dbReference>
<dbReference type="Reactome" id="R-HSA-352230">
    <property type="pathway name" value="Amino acid transport across the plasma membrane"/>
</dbReference>
<dbReference type="Reactome" id="R-HSA-5660862">
    <property type="pathway name" value="Defective SLC7A7 causes lysinuric protein intolerance (LPI)"/>
</dbReference>
<dbReference type="SABIO-RK" id="Q9UM01"/>
<dbReference type="SignaLink" id="Q9UM01"/>
<dbReference type="BioGRID-ORCS" id="9056">
    <property type="hits" value="11 hits in 1148 CRISPR screens"/>
</dbReference>
<dbReference type="ChiTaRS" id="SLC7A7">
    <property type="organism name" value="human"/>
</dbReference>
<dbReference type="GeneWiki" id="SLC7A7"/>
<dbReference type="GenomeRNAi" id="9056"/>
<dbReference type="Pharos" id="Q9UM01">
    <property type="development level" value="Tbio"/>
</dbReference>
<dbReference type="PRO" id="PR:Q9UM01"/>
<dbReference type="Proteomes" id="UP000005640">
    <property type="component" value="Chromosome 14"/>
</dbReference>
<dbReference type="RNAct" id="Q9UM01">
    <property type="molecule type" value="protein"/>
</dbReference>
<dbReference type="Bgee" id="ENSG00000155465">
    <property type="expression patterns" value="Expressed in secondary oocyte and 139 other cell types or tissues"/>
</dbReference>
<dbReference type="ExpressionAtlas" id="Q9UM01">
    <property type="expression patterns" value="baseline and differential"/>
</dbReference>
<dbReference type="GO" id="GO:0016323">
    <property type="term" value="C:basolateral plasma membrane"/>
    <property type="evidence" value="ECO:0000314"/>
    <property type="project" value="UniProtKB"/>
</dbReference>
<dbReference type="GO" id="GO:0005886">
    <property type="term" value="C:plasma membrane"/>
    <property type="evidence" value="ECO:0000304"/>
    <property type="project" value="Reactome"/>
</dbReference>
<dbReference type="GO" id="GO:0015174">
    <property type="term" value="F:basic amino acid transmembrane transporter activity"/>
    <property type="evidence" value="ECO:0000318"/>
    <property type="project" value="GO_Central"/>
</dbReference>
<dbReference type="GO" id="GO:0015179">
    <property type="term" value="F:L-amino acid transmembrane transporter activity"/>
    <property type="evidence" value="ECO:0000318"/>
    <property type="project" value="GO_Central"/>
</dbReference>
<dbReference type="GO" id="GO:0061459">
    <property type="term" value="F:L-arginine transmembrane transporter activity"/>
    <property type="evidence" value="ECO:0000250"/>
    <property type="project" value="UniProtKB"/>
</dbReference>
<dbReference type="GO" id="GO:0003333">
    <property type="term" value="P:amino acid transmembrane transport"/>
    <property type="evidence" value="ECO:0000318"/>
    <property type="project" value="GO_Central"/>
</dbReference>
<dbReference type="GO" id="GO:1990822">
    <property type="term" value="P:basic amino acid transmembrane transport"/>
    <property type="evidence" value="ECO:0000304"/>
    <property type="project" value="GO_Central"/>
</dbReference>
<dbReference type="GO" id="GO:1903826">
    <property type="term" value="P:L-arginine transmembrane transport"/>
    <property type="evidence" value="ECO:0000314"/>
    <property type="project" value="UniProtKB"/>
</dbReference>
<dbReference type="GO" id="GO:0015820">
    <property type="term" value="P:L-leucine transport"/>
    <property type="evidence" value="ECO:0000314"/>
    <property type="project" value="UniProtKB"/>
</dbReference>
<dbReference type="GO" id="GO:0000821">
    <property type="term" value="P:regulation of arginine metabolic process"/>
    <property type="evidence" value="ECO:0000318"/>
    <property type="project" value="GO_Central"/>
</dbReference>
<dbReference type="FunFam" id="1.20.1740.10:FF:000003">
    <property type="entry name" value="Y+L amino acid transporter 1 isoform X1"/>
    <property type="match status" value="1"/>
</dbReference>
<dbReference type="Gene3D" id="1.20.1740.10">
    <property type="entry name" value="Amino acid/polyamine transporter I"/>
    <property type="match status" value="1"/>
</dbReference>
<dbReference type="InterPro" id="IPR002293">
    <property type="entry name" value="AA/rel_permease1"/>
</dbReference>
<dbReference type="InterPro" id="IPR050598">
    <property type="entry name" value="AminoAcid_Transporter"/>
</dbReference>
<dbReference type="PANTHER" id="PTHR11785">
    <property type="entry name" value="AMINO ACID TRANSPORTER"/>
    <property type="match status" value="1"/>
</dbReference>
<dbReference type="PANTHER" id="PTHR11785:SF303">
    <property type="entry name" value="Y+L AMINO ACID TRANSPORTER 1"/>
    <property type="match status" value="1"/>
</dbReference>
<dbReference type="Pfam" id="PF13520">
    <property type="entry name" value="AA_permease_2"/>
    <property type="match status" value="1"/>
</dbReference>
<dbReference type="PIRSF" id="PIRSF006060">
    <property type="entry name" value="AA_transporter"/>
    <property type="match status" value="1"/>
</dbReference>
<sequence length="511" mass="55991">MVDSTEYEVASQPEVETSPLGDGASPGPEQVKLKKEISLLNGVCLIVGNMIGSGIFVSPKGVLIYSASFGLSLVIWAVGGLFSVFGALCYAELGTTIKKSGASYAYILEAFGGFLAFIRLWTSLLIIEPTSQAIIAITFANYMVQPLFPSCFAPYAASRLLAAACICLLTFINCAYVKWGTLVQDIFTYAKVLALIAVIVAGIVRLGQGASTHFENSFEGSSFAVGDIALALYSALFSYSGWDTLNYVTEEIKNPERNLPLSIGISMPIVTIIYILTNVAYYTVLDMRDILASDAVAVTFADQIFGIFNWIIPLSVALSCFGGLNASIVAASRLFFVGSREGHLPDAICMIHVERFTPVPSLLFNGIMALIYLCVEDIFQLINYYSFSYWFFVGLSIVGQLYLRWKEPDRPRPLKLSVFFPIVFCLCTIFLVAVPLYSDTINSLIGIAIALSGLPFYFLIIRVPEHKRPLYLRRIVGSATRYLQVLCMSVAAEMDLEDGGEMPKQRDPKSN</sequence>
<reference key="1">
    <citation type="journal article" date="1998" name="J. Biol. Chem.">
        <title>Identification and characterization of a membrane protein (y+L amino acid transporter-1) that associates with 4F2hc to encode the amino acid transport activity y+L. A candidate gene for lysinuric protein intolerance.</title>
        <authorList>
            <person name="Torrents D."/>
            <person name="Estevez R."/>
            <person name="Pineda M."/>
            <person name="Fernandez E."/>
            <person name="Lloberas J."/>
            <person name="Shi Y.-B."/>
            <person name="Zorzano A."/>
            <person name="Palacin M."/>
        </authorList>
    </citation>
    <scope>NUCLEOTIDE SEQUENCE [MRNA]</scope>
    <scope>FUNCTION</scope>
    <scope>SUBUNIT</scope>
    <scope>TISSUE SPECIFICITY</scope>
    <scope>VARIANT LPI ARG-334</scope>
</reference>
<reference key="2">
    <citation type="journal article" date="1999" name="EMBO J.">
        <title>Amino acid transport of y+L-type by heterodimers of 4F2hc/CD98 and members of the glycoprotein-associated amino acid transporter family.</title>
        <authorList>
            <person name="Pfeiffer R."/>
            <person name="Rossier G."/>
            <person name="Spindler B."/>
            <person name="Meier C."/>
            <person name="Kuehn L.C."/>
            <person name="Verrey F."/>
        </authorList>
    </citation>
    <scope>NUCLEOTIDE SEQUENCE [MRNA]</scope>
    <scope>FUNCTION</scope>
    <scope>BIOPHYSICOCHEMICAL PROPERTIES</scope>
    <scope>SUBUNIT</scope>
    <source>
        <tissue>Testis</tissue>
    </source>
</reference>
<reference key="3">
    <citation type="journal article" date="1999" name="Nat. Genet.">
        <title>SLC7A7, encoding a putative permease-related protein, is mutated in patients with lysinuric protein intolerance.</title>
        <authorList>
            <person name="Borsani G."/>
            <person name="Bassi M.T."/>
            <person name="Sperandeo M.P."/>
            <person name="De Grandi A."/>
            <person name="Buoninconti A."/>
            <person name="Riboni M."/>
            <person name="Manzoni M."/>
            <person name="Incerti B."/>
            <person name="Pepe A."/>
            <person name="Andria G."/>
            <person name="Ballabio A."/>
            <person name="Sebastio G."/>
        </authorList>
    </citation>
    <scope>NUCLEOTIDE SEQUENCE [MRNA]</scope>
    <scope>TISSUE SPECIFICITY</scope>
    <source>
        <tissue>Placenta</tissue>
    </source>
</reference>
<reference key="4">
    <citation type="journal article" date="2000" name="Hum. Mutat.">
        <title>SLC7A7 genomic structure and novel variants in three Japanese lysinuric protein intolerance families.</title>
        <authorList>
            <person name="Noguchi A."/>
            <person name="Shoji Y."/>
            <person name="Koizumi A."/>
            <person name="Takahashi T."/>
            <person name="Shoji Y."/>
            <person name="Matsumori M."/>
            <person name="Kayo T."/>
            <person name="Ohata T."/>
            <person name="Wada Y."/>
            <person name="Yoshimura I."/>
            <person name="Maisawa S."/>
            <person name="Konishi M."/>
            <person name="Takasago Y."/>
            <person name="Takada G."/>
        </authorList>
    </citation>
    <scope>NUCLEOTIDE SEQUENCE [GENOMIC DNA]</scope>
</reference>
<reference key="5">
    <citation type="submission" date="1998-02" db="EMBL/GenBank/DDBJ databases">
        <title>Molecular and biological characterization of a novel monocyte amino acid permease, MOP-2.</title>
        <authorList>
            <person name="Takayama K."/>
            <person name="Yoshimoto M."/>
        </authorList>
    </citation>
    <scope>NUCLEOTIDE SEQUENCE [MRNA]</scope>
</reference>
<reference key="6">
    <citation type="submission" date="1998-11" db="EMBL/GenBank/DDBJ databases">
        <title>Characterization of a human system y+L amino acid transporter.</title>
        <authorList>
            <person name="Fukasawa Y."/>
            <person name="Segawa H."/>
            <person name="Endou H."/>
            <person name="Kanai Y."/>
        </authorList>
    </citation>
    <scope>NUCLEOTIDE SEQUENCE [MRNA]</scope>
    <scope>VARIANT VAL-91</scope>
    <source>
        <tissue>Kidney</tissue>
    </source>
</reference>
<reference key="7">
    <citation type="submission" date="2003-02" db="EMBL/GenBank/DDBJ databases">
        <title>Full-length cDNA libraries and normalization.</title>
        <authorList>
            <person name="Li W.B."/>
            <person name="Gruber C."/>
            <person name="Jessee J."/>
            <person name="Polayes D."/>
        </authorList>
    </citation>
    <scope>NUCLEOTIDE SEQUENCE [MRNA]</scope>
    <source>
        <tissue>B-cell</tissue>
        <tissue>Placenta</tissue>
    </source>
</reference>
<reference key="8">
    <citation type="journal article" date="2004" name="Nat. Genet.">
        <title>Complete sequencing and characterization of 21,243 full-length human cDNAs.</title>
        <authorList>
            <person name="Ota T."/>
            <person name="Suzuki Y."/>
            <person name="Nishikawa T."/>
            <person name="Otsuki T."/>
            <person name="Sugiyama T."/>
            <person name="Irie R."/>
            <person name="Wakamatsu A."/>
            <person name="Hayashi K."/>
            <person name="Sato H."/>
            <person name="Nagai K."/>
            <person name="Kimura K."/>
            <person name="Makita H."/>
            <person name="Sekine M."/>
            <person name="Obayashi M."/>
            <person name="Nishi T."/>
            <person name="Shibahara T."/>
            <person name="Tanaka T."/>
            <person name="Ishii S."/>
            <person name="Yamamoto J."/>
            <person name="Saito K."/>
            <person name="Kawai Y."/>
            <person name="Isono Y."/>
            <person name="Nakamura Y."/>
            <person name="Nagahari K."/>
            <person name="Murakami K."/>
            <person name="Yasuda T."/>
            <person name="Iwayanagi T."/>
            <person name="Wagatsuma M."/>
            <person name="Shiratori A."/>
            <person name="Sudo H."/>
            <person name="Hosoiri T."/>
            <person name="Kaku Y."/>
            <person name="Kodaira H."/>
            <person name="Kondo H."/>
            <person name="Sugawara M."/>
            <person name="Takahashi M."/>
            <person name="Kanda K."/>
            <person name="Yokoi T."/>
            <person name="Furuya T."/>
            <person name="Kikkawa E."/>
            <person name="Omura Y."/>
            <person name="Abe K."/>
            <person name="Kamihara K."/>
            <person name="Katsuta N."/>
            <person name="Sato K."/>
            <person name="Tanikawa M."/>
            <person name="Yamazaki M."/>
            <person name="Ninomiya K."/>
            <person name="Ishibashi T."/>
            <person name="Yamashita H."/>
            <person name="Murakawa K."/>
            <person name="Fujimori K."/>
            <person name="Tanai H."/>
            <person name="Kimata M."/>
            <person name="Watanabe M."/>
            <person name="Hiraoka S."/>
            <person name="Chiba Y."/>
            <person name="Ishida S."/>
            <person name="Ono Y."/>
            <person name="Takiguchi S."/>
            <person name="Watanabe S."/>
            <person name="Yosida M."/>
            <person name="Hotuta T."/>
            <person name="Kusano J."/>
            <person name="Kanehori K."/>
            <person name="Takahashi-Fujii A."/>
            <person name="Hara H."/>
            <person name="Tanase T.-O."/>
            <person name="Nomura Y."/>
            <person name="Togiya S."/>
            <person name="Komai F."/>
            <person name="Hara R."/>
            <person name="Takeuchi K."/>
            <person name="Arita M."/>
            <person name="Imose N."/>
            <person name="Musashino K."/>
            <person name="Yuuki H."/>
            <person name="Oshima A."/>
            <person name="Sasaki N."/>
            <person name="Aotsuka S."/>
            <person name="Yoshikawa Y."/>
            <person name="Matsunawa H."/>
            <person name="Ichihara T."/>
            <person name="Shiohata N."/>
            <person name="Sano S."/>
            <person name="Moriya S."/>
            <person name="Momiyama H."/>
            <person name="Satoh N."/>
            <person name="Takami S."/>
            <person name="Terashima Y."/>
            <person name="Suzuki O."/>
            <person name="Nakagawa S."/>
            <person name="Senoh A."/>
            <person name="Mizoguchi H."/>
            <person name="Goto Y."/>
            <person name="Shimizu F."/>
            <person name="Wakebe H."/>
            <person name="Hishigaki H."/>
            <person name="Watanabe T."/>
            <person name="Sugiyama A."/>
            <person name="Takemoto M."/>
            <person name="Kawakami B."/>
            <person name="Yamazaki M."/>
            <person name="Watanabe K."/>
            <person name="Kumagai A."/>
            <person name="Itakura S."/>
            <person name="Fukuzumi Y."/>
            <person name="Fujimori Y."/>
            <person name="Komiyama M."/>
            <person name="Tashiro H."/>
            <person name="Tanigami A."/>
            <person name="Fujiwara T."/>
            <person name="Ono T."/>
            <person name="Yamada K."/>
            <person name="Fujii Y."/>
            <person name="Ozaki K."/>
            <person name="Hirao M."/>
            <person name="Ohmori Y."/>
            <person name="Kawabata A."/>
            <person name="Hikiji T."/>
            <person name="Kobatake N."/>
            <person name="Inagaki H."/>
            <person name="Ikema Y."/>
            <person name="Okamoto S."/>
            <person name="Okitani R."/>
            <person name="Kawakami T."/>
            <person name="Noguchi S."/>
            <person name="Itoh T."/>
            <person name="Shigeta K."/>
            <person name="Senba T."/>
            <person name="Matsumura K."/>
            <person name="Nakajima Y."/>
            <person name="Mizuno T."/>
            <person name="Morinaga M."/>
            <person name="Sasaki M."/>
            <person name="Togashi T."/>
            <person name="Oyama M."/>
            <person name="Hata H."/>
            <person name="Watanabe M."/>
            <person name="Komatsu T."/>
            <person name="Mizushima-Sugano J."/>
            <person name="Satoh T."/>
            <person name="Shirai Y."/>
            <person name="Takahashi Y."/>
            <person name="Nakagawa K."/>
            <person name="Okumura K."/>
            <person name="Nagase T."/>
            <person name="Nomura N."/>
            <person name="Kikuchi H."/>
            <person name="Masuho Y."/>
            <person name="Yamashita R."/>
            <person name="Nakai K."/>
            <person name="Yada T."/>
            <person name="Nakamura Y."/>
            <person name="Ohara O."/>
            <person name="Isogai T."/>
            <person name="Sugano S."/>
        </authorList>
    </citation>
    <scope>NUCLEOTIDE SEQUENCE [LARGE SCALE MRNA]</scope>
    <source>
        <tissue>Umbilical cord blood</tissue>
    </source>
</reference>
<reference key="9">
    <citation type="submission" date="2005-09" db="EMBL/GenBank/DDBJ databases">
        <authorList>
            <person name="Mural R.J."/>
            <person name="Istrail S."/>
            <person name="Sutton G.G."/>
            <person name="Florea L."/>
            <person name="Halpern A.L."/>
            <person name="Mobarry C.M."/>
            <person name="Lippert R."/>
            <person name="Walenz B."/>
            <person name="Shatkay H."/>
            <person name="Dew I."/>
            <person name="Miller J.R."/>
            <person name="Flanigan M.J."/>
            <person name="Edwards N.J."/>
            <person name="Bolanos R."/>
            <person name="Fasulo D."/>
            <person name="Halldorsson B.V."/>
            <person name="Hannenhalli S."/>
            <person name="Turner R."/>
            <person name="Yooseph S."/>
            <person name="Lu F."/>
            <person name="Nusskern D.R."/>
            <person name="Shue B.C."/>
            <person name="Zheng X.H."/>
            <person name="Zhong F."/>
            <person name="Delcher A.L."/>
            <person name="Huson D.H."/>
            <person name="Kravitz S.A."/>
            <person name="Mouchard L."/>
            <person name="Reinert K."/>
            <person name="Remington K.A."/>
            <person name="Clark A.G."/>
            <person name="Waterman M.S."/>
            <person name="Eichler E.E."/>
            <person name="Adams M.D."/>
            <person name="Hunkapiller M.W."/>
            <person name="Myers E.W."/>
            <person name="Venter J.C."/>
        </authorList>
    </citation>
    <scope>NUCLEOTIDE SEQUENCE [LARGE SCALE GENOMIC DNA]</scope>
</reference>
<reference key="10">
    <citation type="journal article" date="2004" name="Genome Res.">
        <title>The status, quality, and expansion of the NIH full-length cDNA project: the Mammalian Gene Collection (MGC).</title>
        <authorList>
            <consortium name="The MGC Project Team"/>
        </authorList>
    </citation>
    <scope>NUCLEOTIDE SEQUENCE [LARGE SCALE MRNA]</scope>
    <source>
        <tissue>Placenta</tissue>
    </source>
</reference>
<reference key="11">
    <citation type="journal article" date="2000" name="Am. J. Physiol.">
        <title>Arginine transport through system y(+)L in cultured human fibroblasts: normal phenotype of cells from LPI subjects.</title>
        <authorList>
            <person name="Dall'Asta V."/>
            <person name="Bussolati O."/>
            <person name="Sala R."/>
            <person name="Rotoli B.M."/>
            <person name="Sebastio G."/>
            <person name="Sperandeo M.P."/>
            <person name="Andria G."/>
            <person name="Gazzola G.C."/>
        </authorList>
    </citation>
    <scope>TISSUE SPECIFICITY</scope>
</reference>
<reference key="12">
    <citation type="journal article" date="2002" name="Am. J. Physiol.">
        <title>Two-way arginine transport in human endothelial cells: TNF-alpha stimulation is restricted to system y(+).</title>
        <authorList>
            <person name="Sala R."/>
            <person name="Rotoli B.M."/>
            <person name="Colla E."/>
            <person name="Visigalli R."/>
            <person name="Parolari A."/>
            <person name="Bussolati O."/>
            <person name="Gazzola G.C."/>
            <person name="Dall'Asta V."/>
        </authorList>
    </citation>
    <scope>TISSUE SPECIFICITY</scope>
</reference>
<reference key="13">
    <citation type="journal article" date="2003" name="Exp. Physiol.">
        <title>Nitric oxide synthesis requires activity of the cationic and neutral amino acid transport system y+L in human umbilical vein endothelium.</title>
        <authorList>
            <person name="Arancibia-Garavilla Y."/>
            <person name="Toledo F."/>
            <person name="Casanello P."/>
            <person name="Sobrevia L."/>
        </authorList>
    </citation>
    <scope>FUNCTION</scope>
</reference>
<reference key="14">
    <citation type="journal article" date="2004" name="FEBS Lett.">
        <title>INFgamma stimulates arginine transport through system y+L in human monocytes.</title>
        <authorList>
            <person name="Rotoli B.M."/>
            <person name="Bussolati O."/>
            <person name="Sala R."/>
            <person name="Barilli A."/>
            <person name="Talarico E."/>
            <person name="Gazzola G.C."/>
            <person name="Dall'Asta V."/>
        </authorList>
    </citation>
    <scope>FUNCTION</scope>
    <scope>TISSUE SPECIFICITY</scope>
    <scope>INDUCTION</scope>
</reference>
<reference key="15">
    <citation type="journal article" date="2007" name="Am. J. Physiol.">
        <title>Activation of classical protein kinase C decreases transport via systems y+ and y+L.</title>
        <authorList>
            <person name="Rotmann A."/>
            <person name="Simon A."/>
            <person name="Martine U."/>
            <person name="Habermeier A."/>
            <person name="Closs E.I."/>
        </authorList>
    </citation>
    <scope>FUNCTION</scope>
    <scope>TISSUE SPECIFICITY</scope>
</reference>
<reference key="16">
    <citation type="journal article" date="2007" name="Invest. Ophthalmol. Vis. Sci.">
        <title>Ornithine transport via cationic amino acid transporter-1 is involved in ornithine cytotoxicity in retinal pigment epithelial cells.</title>
        <authorList>
            <person name="Kaneko S."/>
            <person name="Ando A."/>
            <person name="Okuda-Ashitaka E."/>
            <person name="Maeda M."/>
            <person name="Furuta K."/>
            <person name="Suzuki M."/>
            <person name="Matsumura M."/>
            <person name="Ito S."/>
        </authorList>
    </citation>
    <scope>TISSUE SPECIFICITY</scope>
</reference>
<reference key="17">
    <citation type="journal article" date="2020" name="J. Cell. Mol. Med.">
        <title>y+LAT1 and y+LAT2 contribution to arginine uptake in different human cell models: Implications in the pathophysiology of Lysinuric Protein Intolerance.</title>
        <authorList>
            <person name="Rotoli B.M."/>
            <person name="Barilli A."/>
            <person name="Visigalli R."/>
            <person name="Ferrari F."/>
            <person name="Dall'Asta V."/>
        </authorList>
    </citation>
    <scope>FUNCTION</scope>
    <scope>TRANSPORTER ACTIVITY</scope>
    <scope>BIOPHYSICOCHEMICAL PROPERTIES</scope>
</reference>
<reference key="18">
    <citation type="journal article" date="1999" name="Nat. Genet.">
        <title>Identification of SLC7A7, encoding y+LAT-1, as the lysinuric protein intolerance gene.</title>
        <authorList>
            <person name="Torrents D."/>
            <person name="Mykkaenen J."/>
            <person name="Pineda M."/>
            <person name="Feliubadalo L."/>
            <person name="Estevez R."/>
            <person name="de Cid R."/>
            <person name="Sanjurjo P."/>
            <person name="Zorzano A."/>
            <person name="Nunes V."/>
            <person name="Huoponen K."/>
            <person name="Reinikainen A."/>
            <person name="Simell O."/>
            <person name="Savontaus M.-L."/>
            <person name="Aula P."/>
            <person name="Palacin M."/>
        </authorList>
    </citation>
    <scope>VARIANT LPI ARG-334</scope>
    <scope>CHARACTERIZATION OF VARIANT LPI ARG-334</scope>
    <scope>FUNCTION</scope>
</reference>
<reference key="19">
    <citation type="journal article" date="2000" name="Am. J. Hum. Genet.">
        <title>Structure of the SLC7A7 gene and mutational analysis of patients affected by lysinuric protein intolerance.</title>
        <authorList>
            <person name="Sperandeo M.P."/>
            <person name="Bassi M.T."/>
            <person name="Riboni M."/>
            <person name="Parenti G."/>
            <person name="Buoninconti A."/>
            <person name="Manzoni M."/>
            <person name="Incerti B."/>
            <person name="Larocca M.R."/>
            <person name="Di Rocco M."/>
            <person name="Strisciuglio P."/>
            <person name="Dianzani I."/>
            <person name="Parini R."/>
            <person name="Candito M."/>
            <person name="Endo F."/>
            <person name="Ballabio A."/>
            <person name="Andria G."/>
            <person name="Sebastio G."/>
            <person name="Borsani G."/>
        </authorList>
    </citation>
    <scope>VARIANT LPI ARG-386</scope>
</reference>
<reference key="20">
    <citation type="journal article" date="2000" name="Hum. Mol. Genet.">
        <title>Functional analysis of novel mutations in y+LAT-1 amino acid transporter gene causing lysinuric protein intolerance (LPI).</title>
        <authorList>
            <person name="Mykkaenen J."/>
            <person name="Torrents D."/>
            <person name="Pineda M."/>
            <person name="Camps M."/>
            <person name="Yoldi M.E."/>
            <person name="Horelli-Kuitunen N."/>
            <person name="Huoponen K."/>
            <person name="Heinonen M."/>
            <person name="Oksanen J."/>
            <person name="Simell O."/>
            <person name="Savontaus M.-L."/>
            <person name="Zorzano A."/>
            <person name="Palacin M."/>
            <person name="Aula P."/>
        </authorList>
    </citation>
    <scope>VARIANTS LPI VAL-54 AND ASP-338</scope>
    <scope>CHARACTERIZATION OF VARIANTS LPI VAL-54 AND ARG-334</scope>
    <scope>FUNCTION</scope>
</reference>
<reference key="21">
    <citation type="journal article" date="2002" name="Hum. Mutat.">
        <title>Five novel SLC7A7 variants and y+L gene-expression pattern in cultured lymphoblasts from Japanese patients with lysinuric protein intolerance.</title>
        <authorList>
            <person name="Shoji Y."/>
            <person name="Noguchi A."/>
            <person name="Shoji Y."/>
            <person name="Matsumori M."/>
            <person name="Takasago Y."/>
            <person name="Takayanagi M."/>
            <person name="Yoshida Y."/>
            <person name="Ihara K."/>
            <person name="Hara T."/>
            <person name="Yamaguchi S."/>
            <person name="Yoshino M."/>
            <person name="Kaji M."/>
            <person name="Yamamoto S."/>
            <person name="Nakai A."/>
            <person name="Koizumi A."/>
            <person name="Hokezu Y."/>
            <person name="Nagamatsu K."/>
            <person name="Mikami H."/>
            <person name="Kitajima I."/>
            <person name="Takada G."/>
        </authorList>
    </citation>
    <scope>VARIANTS LPI PHE-238 AND PRO-489</scope>
</reference>
<reference key="22">
    <citation type="journal article" date="2005" name="Eur. J. Hum. Genet.">
        <title>A y(+)LAT-1 mutant protein interferes with y(+)LAT-2 activity: implications for the molecular pathogenesis of lysinuric protein intolerance.</title>
        <authorList>
            <person name="Sperandeo M.P."/>
            <person name="Paladino S."/>
            <person name="Maiuri L."/>
            <person name="Maroupulos G.D."/>
            <person name="Zurzolo C."/>
            <person name="Taglialatela M."/>
            <person name="Andria G."/>
            <person name="Sebastio G."/>
        </authorList>
    </citation>
    <scope>CHARACTERIZATION OF VARIANTS LPI LEU-36 DEL AND LEU-152</scope>
    <scope>FUNCTION</scope>
    <scope>SUBCELLULAR LOCATION</scope>
</reference>
<reference key="23">
    <citation type="journal article" date="2005" name="Hum. Mutat.">
        <title>Lysinuric protein intolerance: identification and functional analysis of mutations of the SLC7A7 gene.</title>
        <authorList>
            <person name="Sperandeo M.P."/>
            <person name="Annunziata P."/>
            <person name="Ammendola V."/>
            <person name="Fiorito V."/>
            <person name="Pepe A."/>
            <person name="Soldovieri M.V."/>
            <person name="Taglialatela M."/>
            <person name="Andria G."/>
            <person name="Sebastio G."/>
        </authorList>
    </citation>
    <scope>VARIANTS LPI LYS-50; ILE-188 AND MET-333</scope>
    <scope>CHARACTERIZATION OF VARIANTS LPI LYS-50; ILE-188 AND ARG-386</scope>
    <scope>FUNCTION</scope>
</reference>
<reference key="24">
    <citation type="journal article" date="2006" name="Science">
        <title>The consensus coding sequences of human breast and colorectal cancers.</title>
        <authorList>
            <person name="Sjoeblom T."/>
            <person name="Jones S."/>
            <person name="Wood L.D."/>
            <person name="Parsons D.W."/>
            <person name="Lin J."/>
            <person name="Barber T.D."/>
            <person name="Mandelker D."/>
            <person name="Leary R.J."/>
            <person name="Ptak J."/>
            <person name="Silliman N."/>
            <person name="Szabo S."/>
            <person name="Buckhaults P."/>
            <person name="Farrell C."/>
            <person name="Meeh P."/>
            <person name="Markowitz S.D."/>
            <person name="Willis J."/>
            <person name="Dawson D."/>
            <person name="Willson J.K.V."/>
            <person name="Gazdar A.F."/>
            <person name="Hartigan J."/>
            <person name="Wu L."/>
            <person name="Liu C."/>
            <person name="Parmigiani G."/>
            <person name="Park B.H."/>
            <person name="Bachman K.E."/>
            <person name="Papadopoulos N."/>
            <person name="Vogelstein B."/>
            <person name="Kinzler K.W."/>
            <person name="Velculescu V.E."/>
        </authorList>
    </citation>
    <scope>VARIANT [LARGE SCALE ANALYSIS] SER-413</scope>
</reference>
<reference key="25">
    <citation type="journal article" date="2008" name="Hum. Mutat.">
        <title>Lysinuric protein intolerance: update and extended mutation analysis of the SLC7A7 gene.</title>
        <authorList>
            <person name="Sperandeo M.P."/>
            <person name="Andria G."/>
            <person name="Sebastio G."/>
        </authorList>
    </citation>
    <scope>VARIANTS LPI ILE-5; GLU-36 DEL; LYS-50; LEU-53; VAL-54; PRO-124; PRO-140; LEU-152; ILE-188; GLU-191; PHE-238; ASP-251; PRO-261; MET-333; ARG-334; ASP-338; TYR-365; ARG-386 AND PRO-489</scope>
</reference>
<reference key="26">
    <citation type="journal article" date="2013" name="Gen. Physiol. Biophys.">
        <title>Interactions of y+LAT1 and 4F2hc in the y+l amino acid transporter complex: consequences of lysinuric protein intolerance-causing mutations.</title>
        <authorList>
            <person name="Toivonen M."/>
            <person name="Tringham M."/>
            <person name="Kurko J."/>
            <person name="Terho P."/>
            <person name="Simell O."/>
            <person name="Heiskanen K.M."/>
            <person name="Mykkaenen J."/>
        </authorList>
    </citation>
    <scope>VARIANT LPI VAL-54</scope>
    <scope>CHARACTERIZATION OF VARIANT LPI VAL-54</scope>
    <scope>SUBUNIT</scope>
</reference>
<name>YLAT1_HUMAN</name>
<gene>
    <name evidence="27" type="primary">SLC7A7</name>
</gene>
<organism>
    <name type="scientific">Homo sapiens</name>
    <name type="common">Human</name>
    <dbReference type="NCBI Taxonomy" id="9606"/>
    <lineage>
        <taxon>Eukaryota</taxon>
        <taxon>Metazoa</taxon>
        <taxon>Chordata</taxon>
        <taxon>Craniata</taxon>
        <taxon>Vertebrata</taxon>
        <taxon>Euteleostomi</taxon>
        <taxon>Mammalia</taxon>
        <taxon>Eutheria</taxon>
        <taxon>Euarchontoglires</taxon>
        <taxon>Primates</taxon>
        <taxon>Haplorrhini</taxon>
        <taxon>Catarrhini</taxon>
        <taxon>Hominidae</taxon>
        <taxon>Homo</taxon>
    </lineage>
</organism>
<proteinExistence type="evidence at protein level"/>
<accession>Q9UM01</accession>
<accession>B2RAU0</accession>
<accession>D3DS26</accession>
<accession>O95984</accession>
<accession>Q53XC1</accession>
<accession>Q86U07</accession>
<accession>Q9P2V5</accession>
<protein>
    <recommendedName>
        <fullName evidence="26">Y+L amino acid transporter 1</fullName>
    </recommendedName>
    <alternativeName>
        <fullName>Monocyte amino acid permease 2</fullName>
        <shortName>MOP-2</shortName>
    </alternativeName>
    <alternativeName>
        <fullName>Solute carrier family 7 member 7</fullName>
    </alternativeName>
    <alternativeName>
        <fullName>y(+)L-type amino acid transporter 1</fullName>
        <shortName>Y+LAT1</shortName>
        <shortName evidence="25">y+LAT-1</shortName>
    </alternativeName>
</protein>
<evidence type="ECO:0000250" key="1">
    <source>
        <dbReference type="UniProtKB" id="Q9R0S5"/>
    </source>
</evidence>
<evidence type="ECO:0000250" key="2">
    <source>
        <dbReference type="UniProtKB" id="Q9Z1K8"/>
    </source>
</evidence>
<evidence type="ECO:0000255" key="3"/>
<evidence type="ECO:0000256" key="4">
    <source>
        <dbReference type="SAM" id="MobiDB-lite"/>
    </source>
</evidence>
<evidence type="ECO:0000269" key="5">
    <source>
    </source>
</evidence>
<evidence type="ECO:0000269" key="6">
    <source>
    </source>
</evidence>
<evidence type="ECO:0000269" key="7">
    <source>
    </source>
</evidence>
<evidence type="ECO:0000269" key="8">
    <source>
    </source>
</evidence>
<evidence type="ECO:0000269" key="9">
    <source>
    </source>
</evidence>
<evidence type="ECO:0000269" key="10">
    <source>
    </source>
</evidence>
<evidence type="ECO:0000269" key="11">
    <source>
    </source>
</evidence>
<evidence type="ECO:0000269" key="12">
    <source>
    </source>
</evidence>
<evidence type="ECO:0000269" key="13">
    <source>
    </source>
</evidence>
<evidence type="ECO:0000269" key="14">
    <source>
    </source>
</evidence>
<evidence type="ECO:0000269" key="15">
    <source>
    </source>
</evidence>
<evidence type="ECO:0000269" key="16">
    <source>
    </source>
</evidence>
<evidence type="ECO:0000269" key="17">
    <source>
    </source>
</evidence>
<evidence type="ECO:0000269" key="18">
    <source>
    </source>
</evidence>
<evidence type="ECO:0000269" key="19">
    <source>
    </source>
</evidence>
<evidence type="ECO:0000269" key="20">
    <source>
    </source>
</evidence>
<evidence type="ECO:0000269" key="21">
    <source>
    </source>
</evidence>
<evidence type="ECO:0000269" key="22">
    <source>
    </source>
</evidence>
<evidence type="ECO:0000269" key="23">
    <source>
    </source>
</evidence>
<evidence type="ECO:0000269" key="24">
    <source ref="6"/>
</evidence>
<evidence type="ECO:0000303" key="25">
    <source>
    </source>
</evidence>
<evidence type="ECO:0000305" key="26"/>
<evidence type="ECO:0000312" key="27">
    <source>
        <dbReference type="HGNC" id="HGNC:11065"/>
    </source>
</evidence>
<feature type="chain" id="PRO_0000054281" description="Y+L amino acid transporter 1">
    <location>
        <begin position="1"/>
        <end position="511"/>
    </location>
</feature>
<feature type="transmembrane region" description="Helical" evidence="3">
    <location>
        <begin position="37"/>
        <end position="57"/>
    </location>
</feature>
<feature type="transmembrane region" description="Helical" evidence="3">
    <location>
        <begin position="69"/>
        <end position="89"/>
    </location>
</feature>
<feature type="transmembrane region" description="Helical" evidence="3">
    <location>
        <begin position="107"/>
        <end position="127"/>
    </location>
</feature>
<feature type="transmembrane region" description="Helical" evidence="3">
    <location>
        <begin position="133"/>
        <end position="153"/>
    </location>
</feature>
<feature type="transmembrane region" description="Helical" evidence="3">
    <location>
        <begin position="160"/>
        <end position="180"/>
    </location>
</feature>
<feature type="transmembrane region" description="Helical" evidence="3">
    <location>
        <begin position="186"/>
        <end position="206"/>
    </location>
</feature>
<feature type="transmembrane region" description="Helical" evidence="3">
    <location>
        <begin position="222"/>
        <end position="242"/>
    </location>
</feature>
<feature type="transmembrane region" description="Helical" evidence="3">
    <location>
        <begin position="259"/>
        <end position="279"/>
    </location>
</feature>
<feature type="transmembrane region" description="Helical" evidence="3">
    <location>
        <begin position="304"/>
        <end position="324"/>
    </location>
</feature>
<feature type="transmembrane region" description="Helical" evidence="3">
    <location>
        <begin position="383"/>
        <end position="403"/>
    </location>
</feature>
<feature type="transmembrane region" description="Helical" evidence="3">
    <location>
        <begin position="416"/>
        <end position="436"/>
    </location>
</feature>
<feature type="transmembrane region" description="Helical" evidence="3">
    <location>
        <begin position="441"/>
        <end position="461"/>
    </location>
</feature>
<feature type="region of interest" description="Disordered" evidence="4">
    <location>
        <begin position="1"/>
        <end position="28"/>
    </location>
</feature>
<feature type="modified residue" description="Phosphoserine" evidence="2">
    <location>
        <position position="18"/>
    </location>
</feature>
<feature type="modified residue" description="Phosphoserine" evidence="2">
    <location>
        <position position="25"/>
    </location>
</feature>
<feature type="glycosylation site" description="N-linked (GlcNAc...) asparagine" evidence="3">
    <location>
        <position position="325"/>
    </location>
</feature>
<feature type="sequence variant" id="VAR_039092" description="In LPI; dbSNP:rs386833792." evidence="19">
    <original>T</original>
    <variation>I</variation>
    <location>
        <position position="5"/>
    </location>
</feature>
<feature type="sequence variant" id="VAR_039093" description="In LPI; failed to induce cationic amino acid transport activity." evidence="19">
    <location>
        <position position="36"/>
    </location>
</feature>
<feature type="sequence variant" id="VAR_030595" description="In LPI; failed to induce cationic amino acid transport activity; dbSNP:rs386833811." evidence="15 19">
    <original>M</original>
    <variation>K</variation>
    <location>
        <position position="50"/>
    </location>
</feature>
<feature type="sequence variant" id="VAR_039094" description="In LPI; dbSNP:rs386833793." evidence="19">
    <original>S</original>
    <variation>L</variation>
    <location>
        <position position="53"/>
    </location>
</feature>
<feature type="sequence variant" id="VAR_010261" description="In LPI; failed to induce sodium-independent cationic amino acid and sodium-dependent neutral amino acid transport activity; does not affect heterodimerization with SLC3A2; affects expression level; dbSNP:rs121908677." evidence="8 19 20">
    <original>G</original>
    <variation>V</variation>
    <location>
        <position position="54"/>
    </location>
</feature>
<feature type="sequence variant" id="VAR_039095" description="In dbSNP:rs11568438." evidence="24">
    <original>A</original>
    <variation>V</variation>
    <location>
        <position position="91"/>
    </location>
</feature>
<feature type="sequence variant" id="VAR_039096" description="In LPI; dbSNP:rs386833814." evidence="19">
    <original>L</original>
    <variation>P</variation>
    <location>
        <position position="124"/>
    </location>
</feature>
<feature type="sequence variant" id="VAR_039097" description="In LPI; dbSNP:rs386833815." evidence="19">
    <original>A</original>
    <variation>P</variation>
    <location>
        <position position="140"/>
    </location>
</feature>
<feature type="sequence variant" id="VAR_039098" description="In LPI; moderately reduced cationic amino acid transport activity; dbSNP:rs386833816." evidence="14 19">
    <original>F</original>
    <variation>L</variation>
    <location>
        <position position="152"/>
    </location>
</feature>
<feature type="sequence variant" id="VAR_039099" description="In dbSNP:rs11568437.">
    <original>R</original>
    <variation>C</variation>
    <location>
        <position position="159"/>
    </location>
</feature>
<feature type="sequence variant" id="VAR_030596" description="In LPI; failed to induce cationic amino acid transport activity; dbSNP:rs386833819." evidence="15 19">
    <original>T</original>
    <variation>I</variation>
    <location>
        <position position="188"/>
    </location>
</feature>
<feature type="sequence variant" id="VAR_039100" description="In LPI; dbSNP:rs386833820." evidence="19">
    <original>K</original>
    <variation>E</variation>
    <location>
        <position position="191"/>
    </location>
</feature>
<feature type="sequence variant" id="VAR_030597" description="In LPI; dbSNP:rs386833823." evidence="11 19">
    <original>S</original>
    <variation>F</variation>
    <location>
        <position position="238"/>
    </location>
</feature>
<feature type="sequence variant" id="VAR_039101" description="In LPI; dbSNP:rs386833824." evidence="19">
    <original>E</original>
    <variation>D</variation>
    <location>
        <position position="251"/>
    </location>
</feature>
<feature type="sequence variant" id="VAR_039102" description="In LPI; dbSNP:rs386833825." evidence="19">
    <original>L</original>
    <variation>P</variation>
    <location>
        <position position="261"/>
    </location>
</feature>
<feature type="sequence variant" id="VAR_030598" description="In LPI; dbSNP:rs386833829." evidence="15 19">
    <original>R</original>
    <variation>M</variation>
    <location>
        <position position="333"/>
    </location>
</feature>
<feature type="sequence variant" id="VAR_010262" description="In LPI; failed to induce sodium-independent cationic amino acid and sodium-dependent neutral amino acid transport activity; dbSNP:rs72552272." evidence="5 8 19 22">
    <original>L</original>
    <variation>R</variation>
    <location>
        <position position="334"/>
    </location>
</feature>
<feature type="sequence variant" id="VAR_010999" description="In LPI; dbSNP:rs386833795." evidence="8 19">
    <original>G</original>
    <variation>D</variation>
    <location>
        <position position="338"/>
    </location>
</feature>
<feature type="sequence variant" id="VAR_039103" description="In LPI; dbSNP:rs386833797." evidence="19">
    <original>N</original>
    <variation>Y</variation>
    <location>
        <position position="365"/>
    </location>
</feature>
<feature type="sequence variant" id="VAR_011000" description="In LPI; failed to induce cationic amino acid transport activity; dbSNP:rs386833799." evidence="7 15 19">
    <original>S</original>
    <variation>R</variation>
    <location>
        <position position="386"/>
    </location>
</feature>
<feature type="sequence variant" id="VAR_036609" description="In a breast cancer sample; somatic mutation." evidence="16">
    <original>P</original>
    <variation>S</variation>
    <location>
        <position position="413"/>
    </location>
</feature>
<feature type="sequence variant" id="VAR_030599" description="In LPI; dbSNP:rs386833810." evidence="11 19">
    <original>S</original>
    <variation>P</variation>
    <location>
        <position position="489"/>
    </location>
</feature>